<reference key="1">
    <citation type="journal article" date="1997" name="J. Biol. Chem.">
        <title>Differential interaction of nuclear receptors with the putative human transcriptional coactivator hTIF1.</title>
        <authorList>
            <person name="Thenot S."/>
            <person name="Henriquet C."/>
            <person name="Rochefort H."/>
            <person name="Cavailles V."/>
        </authorList>
    </citation>
    <scope>NUCLEOTIDE SEQUENCE [MRNA] (ISOFORM SHORT)</scope>
    <scope>SUBUNIT</scope>
    <source>
        <tissue>Mammary cancer</tissue>
    </source>
</reference>
<reference key="2">
    <citation type="journal article" date="1999" name="Oncogene">
        <title>TIF1gamma, a novel member of the transcriptional intermediary factor 1 family.</title>
        <authorList>
            <person name="Venturini L."/>
            <person name="You J."/>
            <person name="Stadler M."/>
            <person name="Galien R."/>
            <person name="Lallemand V."/>
            <person name="Koken M.H.M."/>
            <person name="Mattei M.-G."/>
            <person name="Ganser A."/>
            <person name="Chambon P."/>
            <person name="Losson R."/>
            <person name="De The H."/>
        </authorList>
    </citation>
    <scope>NUCLEOTIDE SEQUENCE [MRNA] (ISOFORM SHORT)</scope>
</reference>
<reference key="3">
    <citation type="journal article" date="2004" name="Nat. Genet.">
        <title>Complete sequencing and characterization of 21,243 full-length human cDNAs.</title>
        <authorList>
            <person name="Ota T."/>
            <person name="Suzuki Y."/>
            <person name="Nishikawa T."/>
            <person name="Otsuki T."/>
            <person name="Sugiyama T."/>
            <person name="Irie R."/>
            <person name="Wakamatsu A."/>
            <person name="Hayashi K."/>
            <person name="Sato H."/>
            <person name="Nagai K."/>
            <person name="Kimura K."/>
            <person name="Makita H."/>
            <person name="Sekine M."/>
            <person name="Obayashi M."/>
            <person name="Nishi T."/>
            <person name="Shibahara T."/>
            <person name="Tanaka T."/>
            <person name="Ishii S."/>
            <person name="Yamamoto J."/>
            <person name="Saito K."/>
            <person name="Kawai Y."/>
            <person name="Isono Y."/>
            <person name="Nakamura Y."/>
            <person name="Nagahari K."/>
            <person name="Murakami K."/>
            <person name="Yasuda T."/>
            <person name="Iwayanagi T."/>
            <person name="Wagatsuma M."/>
            <person name="Shiratori A."/>
            <person name="Sudo H."/>
            <person name="Hosoiri T."/>
            <person name="Kaku Y."/>
            <person name="Kodaira H."/>
            <person name="Kondo H."/>
            <person name="Sugawara M."/>
            <person name="Takahashi M."/>
            <person name="Kanda K."/>
            <person name="Yokoi T."/>
            <person name="Furuya T."/>
            <person name="Kikkawa E."/>
            <person name="Omura Y."/>
            <person name="Abe K."/>
            <person name="Kamihara K."/>
            <person name="Katsuta N."/>
            <person name="Sato K."/>
            <person name="Tanikawa M."/>
            <person name="Yamazaki M."/>
            <person name="Ninomiya K."/>
            <person name="Ishibashi T."/>
            <person name="Yamashita H."/>
            <person name="Murakawa K."/>
            <person name="Fujimori K."/>
            <person name="Tanai H."/>
            <person name="Kimata M."/>
            <person name="Watanabe M."/>
            <person name="Hiraoka S."/>
            <person name="Chiba Y."/>
            <person name="Ishida S."/>
            <person name="Ono Y."/>
            <person name="Takiguchi S."/>
            <person name="Watanabe S."/>
            <person name="Yosida M."/>
            <person name="Hotuta T."/>
            <person name="Kusano J."/>
            <person name="Kanehori K."/>
            <person name="Takahashi-Fujii A."/>
            <person name="Hara H."/>
            <person name="Tanase T.-O."/>
            <person name="Nomura Y."/>
            <person name="Togiya S."/>
            <person name="Komai F."/>
            <person name="Hara R."/>
            <person name="Takeuchi K."/>
            <person name="Arita M."/>
            <person name="Imose N."/>
            <person name="Musashino K."/>
            <person name="Yuuki H."/>
            <person name="Oshima A."/>
            <person name="Sasaki N."/>
            <person name="Aotsuka S."/>
            <person name="Yoshikawa Y."/>
            <person name="Matsunawa H."/>
            <person name="Ichihara T."/>
            <person name="Shiohata N."/>
            <person name="Sano S."/>
            <person name="Moriya S."/>
            <person name="Momiyama H."/>
            <person name="Satoh N."/>
            <person name="Takami S."/>
            <person name="Terashima Y."/>
            <person name="Suzuki O."/>
            <person name="Nakagawa S."/>
            <person name="Senoh A."/>
            <person name="Mizoguchi H."/>
            <person name="Goto Y."/>
            <person name="Shimizu F."/>
            <person name="Wakebe H."/>
            <person name="Hishigaki H."/>
            <person name="Watanabe T."/>
            <person name="Sugiyama A."/>
            <person name="Takemoto M."/>
            <person name="Kawakami B."/>
            <person name="Yamazaki M."/>
            <person name="Watanabe K."/>
            <person name="Kumagai A."/>
            <person name="Itakura S."/>
            <person name="Fukuzumi Y."/>
            <person name="Fujimori Y."/>
            <person name="Komiyama M."/>
            <person name="Tashiro H."/>
            <person name="Tanigami A."/>
            <person name="Fujiwara T."/>
            <person name="Ono T."/>
            <person name="Yamada K."/>
            <person name="Fujii Y."/>
            <person name="Ozaki K."/>
            <person name="Hirao M."/>
            <person name="Ohmori Y."/>
            <person name="Kawabata A."/>
            <person name="Hikiji T."/>
            <person name="Kobatake N."/>
            <person name="Inagaki H."/>
            <person name="Ikema Y."/>
            <person name="Okamoto S."/>
            <person name="Okitani R."/>
            <person name="Kawakami T."/>
            <person name="Noguchi S."/>
            <person name="Itoh T."/>
            <person name="Shigeta K."/>
            <person name="Senba T."/>
            <person name="Matsumura K."/>
            <person name="Nakajima Y."/>
            <person name="Mizuno T."/>
            <person name="Morinaga M."/>
            <person name="Sasaki M."/>
            <person name="Togashi T."/>
            <person name="Oyama M."/>
            <person name="Hata H."/>
            <person name="Watanabe M."/>
            <person name="Komatsu T."/>
            <person name="Mizushima-Sugano J."/>
            <person name="Satoh T."/>
            <person name="Shirai Y."/>
            <person name="Takahashi Y."/>
            <person name="Nakagawa K."/>
            <person name="Okumura K."/>
            <person name="Nagase T."/>
            <person name="Nomura N."/>
            <person name="Kikuchi H."/>
            <person name="Masuho Y."/>
            <person name="Yamashita R."/>
            <person name="Nakai K."/>
            <person name="Yada T."/>
            <person name="Nakamura Y."/>
            <person name="Ohara O."/>
            <person name="Isogai T."/>
            <person name="Sugano S."/>
        </authorList>
    </citation>
    <scope>NUCLEOTIDE SEQUENCE [LARGE SCALE MRNA] (ISOFORM LONG)</scope>
    <source>
        <tissue>Retinoblastoma</tissue>
    </source>
</reference>
<reference key="4">
    <citation type="journal article" date="2003" name="Science">
        <title>Human chromosome 7: DNA sequence and biology.</title>
        <authorList>
            <person name="Scherer S.W."/>
            <person name="Cheung J."/>
            <person name="MacDonald J.R."/>
            <person name="Osborne L.R."/>
            <person name="Nakabayashi K."/>
            <person name="Herbrick J.-A."/>
            <person name="Carson A.R."/>
            <person name="Parker-Katiraee L."/>
            <person name="Skaug J."/>
            <person name="Khaja R."/>
            <person name="Zhang J."/>
            <person name="Hudek A.K."/>
            <person name="Li M."/>
            <person name="Haddad M."/>
            <person name="Duggan G.E."/>
            <person name="Fernandez B.A."/>
            <person name="Kanematsu E."/>
            <person name="Gentles S."/>
            <person name="Christopoulos C.C."/>
            <person name="Choufani S."/>
            <person name="Kwasnicka D."/>
            <person name="Zheng X.H."/>
            <person name="Lai Z."/>
            <person name="Nusskern D.R."/>
            <person name="Zhang Q."/>
            <person name="Gu Z."/>
            <person name="Lu F."/>
            <person name="Zeesman S."/>
            <person name="Nowaczyk M.J."/>
            <person name="Teshima I."/>
            <person name="Chitayat D."/>
            <person name="Shuman C."/>
            <person name="Weksberg R."/>
            <person name="Zackai E.H."/>
            <person name="Grebe T.A."/>
            <person name="Cox S.R."/>
            <person name="Kirkpatrick S.J."/>
            <person name="Rahman N."/>
            <person name="Friedman J.M."/>
            <person name="Heng H.H.Q."/>
            <person name="Pelicci P.G."/>
            <person name="Lo-Coco F."/>
            <person name="Belloni E."/>
            <person name="Shaffer L.G."/>
            <person name="Pober B."/>
            <person name="Morton C.C."/>
            <person name="Gusella J.F."/>
            <person name="Bruns G.A.P."/>
            <person name="Korf B.R."/>
            <person name="Quade B.J."/>
            <person name="Ligon A.H."/>
            <person name="Ferguson H."/>
            <person name="Higgins A.W."/>
            <person name="Leach N.T."/>
            <person name="Herrick S.R."/>
            <person name="Lemyre E."/>
            <person name="Farra C.G."/>
            <person name="Kim H.-G."/>
            <person name="Summers A.M."/>
            <person name="Gripp K.W."/>
            <person name="Roberts W."/>
            <person name="Szatmari P."/>
            <person name="Winsor E.J.T."/>
            <person name="Grzeschik K.-H."/>
            <person name="Teebi A."/>
            <person name="Minassian B.A."/>
            <person name="Kere J."/>
            <person name="Armengol L."/>
            <person name="Pujana M.A."/>
            <person name="Estivill X."/>
            <person name="Wilson M.D."/>
            <person name="Koop B.F."/>
            <person name="Tosi S."/>
            <person name="Moore G.E."/>
            <person name="Boright A.P."/>
            <person name="Zlotorynski E."/>
            <person name="Kerem B."/>
            <person name="Kroisel P.M."/>
            <person name="Petek E."/>
            <person name="Oscier D.G."/>
            <person name="Mould S.J."/>
            <person name="Doehner H."/>
            <person name="Doehner K."/>
            <person name="Rommens J.M."/>
            <person name="Vincent J.B."/>
            <person name="Venter J.C."/>
            <person name="Li P.W."/>
            <person name="Mural R.J."/>
            <person name="Adams M.D."/>
            <person name="Tsui L.-C."/>
        </authorList>
    </citation>
    <scope>NUCLEOTIDE SEQUENCE [LARGE SCALE GENOMIC DNA]</scope>
</reference>
<reference key="5">
    <citation type="submission" date="2005-07" db="EMBL/GenBank/DDBJ databases">
        <authorList>
            <person name="Mural R.J."/>
            <person name="Istrail S."/>
            <person name="Sutton G.G."/>
            <person name="Florea L."/>
            <person name="Halpern A.L."/>
            <person name="Mobarry C.M."/>
            <person name="Lippert R."/>
            <person name="Walenz B."/>
            <person name="Shatkay H."/>
            <person name="Dew I."/>
            <person name="Miller J.R."/>
            <person name="Flanigan M.J."/>
            <person name="Edwards N.J."/>
            <person name="Bolanos R."/>
            <person name="Fasulo D."/>
            <person name="Halldorsson B.V."/>
            <person name="Hannenhalli S."/>
            <person name="Turner R."/>
            <person name="Yooseph S."/>
            <person name="Lu F."/>
            <person name="Nusskern D.R."/>
            <person name="Shue B.C."/>
            <person name="Zheng X.H."/>
            <person name="Zhong F."/>
            <person name="Delcher A.L."/>
            <person name="Huson D.H."/>
            <person name="Kravitz S.A."/>
            <person name="Mouchard L."/>
            <person name="Reinert K."/>
            <person name="Remington K.A."/>
            <person name="Clark A.G."/>
            <person name="Waterman M.S."/>
            <person name="Eichler E.E."/>
            <person name="Adams M.D."/>
            <person name="Hunkapiller M.W."/>
            <person name="Myers E.W."/>
            <person name="Venter J.C."/>
        </authorList>
    </citation>
    <scope>NUCLEOTIDE SEQUENCE [LARGE SCALE GENOMIC DNA]</scope>
</reference>
<reference key="6">
    <citation type="journal article" date="2004" name="Genome Res.">
        <title>The status, quality, and expansion of the NIH full-length cDNA project: the Mammalian Gene Collection (MGC).</title>
        <authorList>
            <consortium name="The MGC Project Team"/>
        </authorList>
    </citation>
    <scope>NUCLEOTIDE SEQUENCE [LARGE SCALE MRNA] (ISOFORM LONG)</scope>
    <source>
        <tissue>Testis</tissue>
    </source>
</reference>
<reference key="7">
    <citation type="submission" date="1999-01" db="UniProtKB">
        <authorList>
            <person name="Cavailles V."/>
        </authorList>
    </citation>
    <scope>PROTEIN SEQUENCE OF 477-510 (ISOFORM LONG)</scope>
    <source>
        <tissue>Mammary cancer</tissue>
    </source>
</reference>
<reference key="8">
    <citation type="journal article" date="2000" name="Mol. Endocrinol.">
        <title>Crucial role of the H11-H12 loop in stabilizing the active conformation of the human mineralocorticoid receptor.</title>
        <authorList>
            <person name="Hellal-Levy C."/>
            <person name="Fagart J."/>
            <person name="Souque A."/>
            <person name="Wurtz J.-M."/>
            <person name="Moras D."/>
            <person name="Rafestin-Oblin M.-E."/>
        </authorList>
    </citation>
    <scope>INTERACTION WITH NR3C2</scope>
</reference>
<reference key="9">
    <citation type="journal article" date="1999" name="Oncogene">
        <title>The transcription coactivator HTIF1 and a related protein are fused to the RET receptor tyrosine kinase in childhood papillary thyroid carcinomas.</title>
        <authorList>
            <person name="Klugbauer S."/>
            <person name="Rabes H.M."/>
        </authorList>
    </citation>
    <scope>CHROMOSOMAL TRANSLOCATION WITH RET</scope>
    <source>
        <tissue>Thyroid</tissue>
    </source>
</reference>
<reference key="10">
    <citation type="journal article" date="2006" name="Cell">
        <title>Global, in vivo, and site-specific phosphorylation dynamics in signaling networks.</title>
        <authorList>
            <person name="Olsen J.V."/>
            <person name="Blagoev B."/>
            <person name="Gnad F."/>
            <person name="Macek B."/>
            <person name="Kumar C."/>
            <person name="Mortensen P."/>
            <person name="Mann M."/>
        </authorList>
    </citation>
    <scope>PHOSPHORYLATION [LARGE SCALE ANALYSIS] AT SER-811; SER-1025 AND SER-1028</scope>
    <scope>IDENTIFICATION BY MASS SPECTROMETRY [LARGE SCALE ANALYSIS]</scope>
    <source>
        <tissue>Cervix carcinoma</tissue>
    </source>
</reference>
<reference key="11">
    <citation type="journal article" date="2006" name="Mol. Endocrinol.">
        <title>Transcriptional intermediary factor 1alpha mediates physical interaction and functional synergy between the coactivator-associated arginine methyltransferase 1 and glucocorticoid receptor-interacting protein 1 nuclear receptor coactivators.</title>
        <authorList>
            <person name="Teyssier C."/>
            <person name="Ou C.Y."/>
            <person name="Khetchoumian K."/>
            <person name="Losson R."/>
            <person name="Stallcup M.R."/>
        </authorList>
    </citation>
    <scope>FUNCTION</scope>
</reference>
<reference key="12">
    <citation type="journal article" date="2008" name="Proc. Natl. Acad. Sci. U.S.A.">
        <title>A quantitative atlas of mitotic phosphorylation.</title>
        <authorList>
            <person name="Dephoure N."/>
            <person name="Zhou C."/>
            <person name="Villen J."/>
            <person name="Beausoleil S.A."/>
            <person name="Bakalarski C.E."/>
            <person name="Elledge S.J."/>
            <person name="Gygi S.P."/>
        </authorList>
    </citation>
    <scope>PHOSPHORYLATION [LARGE SCALE ANALYSIS] AT SER-667; SER-768; SER-808 AND SER-811</scope>
    <scope>IDENTIFICATION BY MASS SPECTROMETRY [LARGE SCALE ANALYSIS]</scope>
    <source>
        <tissue>Cervix carcinoma</tissue>
    </source>
</reference>
<reference key="13">
    <citation type="journal article" date="2009" name="Anal. Chem.">
        <title>Lys-N and trypsin cover complementary parts of the phosphoproteome in a refined SCX-based approach.</title>
        <authorList>
            <person name="Gauci S."/>
            <person name="Helbig A.O."/>
            <person name="Slijper M."/>
            <person name="Krijgsveld J."/>
            <person name="Heck A.J."/>
            <person name="Mohammed S."/>
        </authorList>
    </citation>
    <scope>IDENTIFICATION BY MASS SPECTROMETRY [LARGE SCALE ANALYSIS]</scope>
</reference>
<reference key="14">
    <citation type="journal article" date="2009" name="Biochim. Biophys. Acta">
        <title>TRIM24 mediates ligand-dependent activation of androgen receptor and is repressed by a bromodomain-containing protein, BRD7, in prostate cancer cells.</title>
        <authorList>
            <person name="Kikuchi M."/>
            <person name="Okumura F."/>
            <person name="Tsukiyama T."/>
            <person name="Watanabe M."/>
            <person name="Miyajima N."/>
            <person name="Tanaka J."/>
            <person name="Imamura M."/>
            <person name="Hatakeyama S."/>
        </authorList>
    </citation>
    <scope>INTERACTION WITH AR</scope>
</reference>
<reference key="15">
    <citation type="journal article" date="2009" name="Proc. Natl. Acad. Sci. U.S.A.">
        <title>Trim24 targets endogenous p53 for degradation.</title>
        <authorList>
            <person name="Allton K."/>
            <person name="Jain A.K."/>
            <person name="Herz H.M."/>
            <person name="Tsai W.W."/>
            <person name="Jung S.Y."/>
            <person name="Qin J."/>
            <person name="Bergmann A."/>
            <person name="Johnson R.L."/>
            <person name="Barton M.C."/>
        </authorList>
    </citation>
    <scope>FUNCTION AS E3 UBIQUITIN LIGASE</scope>
    <scope>INTERACTION WITH TP53</scope>
</reference>
<reference key="16">
    <citation type="journal article" date="2009" name="Sci. Signal.">
        <title>Quantitative phosphoproteomic analysis of T cell receptor signaling reveals system-wide modulation of protein-protein interactions.</title>
        <authorList>
            <person name="Mayya V."/>
            <person name="Lundgren D.H."/>
            <person name="Hwang S.-I."/>
            <person name="Rezaul K."/>
            <person name="Wu L."/>
            <person name="Eng J.K."/>
            <person name="Rodionov V."/>
            <person name="Han D.K."/>
        </authorList>
    </citation>
    <scope>PHOSPHORYLATION [LARGE SCALE ANALYSIS] AT SER-1025 AND SER-1028</scope>
    <scope>IDENTIFICATION BY MASS SPECTROMETRY [LARGE SCALE ANALYSIS]</scope>
    <source>
        <tissue>Leukemic T-cell</tissue>
    </source>
</reference>
<reference key="17">
    <citation type="journal article" date="2010" name="Sci. Signal.">
        <title>Quantitative phosphoproteomics reveals widespread full phosphorylation site occupancy during mitosis.</title>
        <authorList>
            <person name="Olsen J.V."/>
            <person name="Vermeulen M."/>
            <person name="Santamaria A."/>
            <person name="Kumar C."/>
            <person name="Miller M.L."/>
            <person name="Jensen L.J."/>
            <person name="Gnad F."/>
            <person name="Cox J."/>
            <person name="Jensen T.S."/>
            <person name="Nigg E.A."/>
            <person name="Brunak S."/>
            <person name="Mann M."/>
        </authorList>
    </citation>
    <scope>PHOSPHORYLATION [LARGE SCALE ANALYSIS] AT THR-101; SER-110; SER-768 AND SER-811</scope>
    <scope>IDENTIFICATION BY MASS SPECTROMETRY [LARGE SCALE ANALYSIS]</scope>
    <source>
        <tissue>Cervix carcinoma</tissue>
    </source>
</reference>
<reference key="18">
    <citation type="journal article" date="2011" name="BMC Syst. Biol.">
        <title>Initial characterization of the human central proteome.</title>
        <authorList>
            <person name="Burkard T.R."/>
            <person name="Planyavsky M."/>
            <person name="Kaupe I."/>
            <person name="Breitwieser F.P."/>
            <person name="Buerckstuemmer T."/>
            <person name="Bennett K.L."/>
            <person name="Superti-Furga G."/>
            <person name="Colinge J."/>
        </authorList>
    </citation>
    <scope>IDENTIFICATION BY MASS SPECTROMETRY [LARGE SCALE ANALYSIS]</scope>
</reference>
<reference key="19">
    <citation type="journal article" date="2011" name="Sci. Signal.">
        <title>System-wide temporal characterization of the proteome and phosphoproteome of human embryonic stem cell differentiation.</title>
        <authorList>
            <person name="Rigbolt K.T."/>
            <person name="Prokhorova T.A."/>
            <person name="Akimov V."/>
            <person name="Henningsen J."/>
            <person name="Johansen P.T."/>
            <person name="Kratchmarova I."/>
            <person name="Kassem M."/>
            <person name="Mann M."/>
            <person name="Olsen J.V."/>
            <person name="Blagoev B."/>
        </authorList>
    </citation>
    <scope>PHOSPHORYLATION [LARGE SCALE ANALYSIS] AT SER-744; SER-811; THR-818; SER-1019; SER-1028 AND SER-1042</scope>
    <scope>IDENTIFICATION BY MASS SPECTROMETRY [LARGE SCALE ANALYSIS]</scope>
</reference>
<reference key="20">
    <citation type="journal article" date="2012" name="PLoS ONE">
        <title>TRIM16 acts as an E3 ubiquitin ligase and can heterodimerize with other TRIM family members.</title>
        <authorList>
            <person name="Bell J.L."/>
            <person name="Malyukova A."/>
            <person name="Holien J.K."/>
            <person name="Koach J."/>
            <person name="Parker M.W."/>
            <person name="Kavallaris M."/>
            <person name="Marshall G.M."/>
            <person name="Cheung B.B."/>
        </authorList>
    </citation>
    <scope>INTERACTION WITH TRIM16</scope>
</reference>
<reference key="21">
    <citation type="journal article" date="2012" name="Proc. Natl. Acad. Sci. U.S.A.">
        <title>N-terminal acetylome analyses and functional insights of the N-terminal acetyltransferase NatB.</title>
        <authorList>
            <person name="Van Damme P."/>
            <person name="Lasa M."/>
            <person name="Polevoda B."/>
            <person name="Gazquez C."/>
            <person name="Elosegui-Artola A."/>
            <person name="Kim D.S."/>
            <person name="De Juan-Pardo E."/>
            <person name="Demeyer K."/>
            <person name="Hole K."/>
            <person name="Larrea E."/>
            <person name="Timmerman E."/>
            <person name="Prieto J."/>
            <person name="Arnesen T."/>
            <person name="Sherman F."/>
            <person name="Gevaert K."/>
            <person name="Aldabe R."/>
        </authorList>
    </citation>
    <scope>IDENTIFICATION BY MASS SPECTROMETRY [LARGE SCALE ANALYSIS]</scope>
</reference>
<reference key="22">
    <citation type="journal article" date="2013" name="J. Proteome Res.">
        <title>Toward a comprehensive characterization of a human cancer cell phosphoproteome.</title>
        <authorList>
            <person name="Zhou H."/>
            <person name="Di Palma S."/>
            <person name="Preisinger C."/>
            <person name="Peng M."/>
            <person name="Polat A.N."/>
            <person name="Heck A.J."/>
            <person name="Mohammed S."/>
        </authorList>
    </citation>
    <scope>PHOSPHORYLATION [LARGE SCALE ANALYSIS] AT SER-654; SER-744; SER-811; SER-1025 AND SER-1028</scope>
    <scope>IDENTIFICATION BY MASS SPECTROMETRY [LARGE SCALE ANALYSIS]</scope>
    <source>
        <tissue>Cervix carcinoma</tissue>
        <tissue>Erythroleukemia</tissue>
    </source>
</reference>
<reference key="23">
    <citation type="journal article" date="2014" name="J. Proteomics">
        <title>An enzyme assisted RP-RPLC approach for in-depth analysis of human liver phosphoproteome.</title>
        <authorList>
            <person name="Bian Y."/>
            <person name="Song C."/>
            <person name="Cheng K."/>
            <person name="Dong M."/>
            <person name="Wang F."/>
            <person name="Huang J."/>
            <person name="Sun D."/>
            <person name="Wang L."/>
            <person name="Ye M."/>
            <person name="Zou H."/>
        </authorList>
    </citation>
    <scope>IDENTIFICATION BY MASS SPECTROMETRY [LARGE SCALE ANALYSIS]</scope>
    <source>
        <tissue>Liver</tissue>
    </source>
</reference>
<reference key="24">
    <citation type="journal article" date="2014" name="Mol. Cell. Biol.">
        <title>TRIM24 is a p53-induced E3-ubiquitin ligase that undergoes ATM-mediated phosphorylation and autodegradation during DNA damage.</title>
        <authorList>
            <person name="Jain A.K."/>
            <person name="Allton K."/>
            <person name="Duncan A.D."/>
            <person name="Barton M.C."/>
        </authorList>
    </citation>
    <scope>FUNCTION</scope>
    <scope>INDUCTION BY TP53</scope>
    <scope>CATALYTIC ACTIVITY</scope>
    <scope>PHOSPHORYLATION AT SER-768</scope>
    <scope>MUTAGENESIS OF SER-768</scope>
</reference>
<reference key="25">
    <citation type="journal article" date="2014" name="Nat. Struct. Mol. Biol.">
        <title>Uncovering global SUMOylation signaling networks in a site-specific manner.</title>
        <authorList>
            <person name="Hendriks I.A."/>
            <person name="D'Souza R.C."/>
            <person name="Yang B."/>
            <person name="Verlaan-de Vries M."/>
            <person name="Mann M."/>
            <person name="Vertegaal A.C."/>
        </authorList>
    </citation>
    <scope>SUMOYLATION [LARGE SCALE ANALYSIS] AT LYS-711; LYS-723 AND LYS-949</scope>
    <scope>IDENTIFICATION BY MASS SPECTROMETRY [LARGE SCALE ANALYSIS]</scope>
</reference>
<reference key="26">
    <citation type="journal article" date="2014" name="Proc. Natl. Acad. Sci. U.S.A.">
        <title>Mapping of SUMO sites and analysis of SUMOylation changes induced by external stimuli.</title>
        <authorList>
            <person name="Impens F."/>
            <person name="Radoshevich L."/>
            <person name="Cossart P."/>
            <person name="Ribet D."/>
        </authorList>
    </citation>
    <scope>SUMOYLATION [LARGE SCALE ANALYSIS] AT LYS-723 AND LYS-741</scope>
    <scope>IDENTIFICATION BY MASS SPECTROMETRY [LARGE SCALE ANALYSIS]</scope>
</reference>
<reference key="27">
    <citation type="journal article" date="2015" name="Cell Rep.">
        <title>SUMO-2 orchestrates chromatin modifiers in response to DNA damage.</title>
        <authorList>
            <person name="Hendriks I.A."/>
            <person name="Treffers L.W."/>
            <person name="Verlaan-de Vries M."/>
            <person name="Olsen J.V."/>
            <person name="Vertegaal A.C."/>
        </authorList>
    </citation>
    <scope>SUMOYLATION [LARGE SCALE ANALYSIS] AT LYS-702; LYS-723 AND LYS-1041</scope>
    <scope>IDENTIFICATION BY MASS SPECTROMETRY [LARGE SCALE ANALYSIS]</scope>
</reference>
<reference key="28">
    <citation type="journal article" date="2015" name="Genes Dev.">
        <title>Screen identifies bromodomain protein ZMYND8 in chromatin recognition of transcription-associated DNA damage that promotes homologous recombination.</title>
        <authorList>
            <person name="Gong F."/>
            <person name="Chiu L.Y."/>
            <person name="Cox B."/>
            <person name="Aymard F."/>
            <person name="Clouaire T."/>
            <person name="Leung J.W."/>
            <person name="Cammarata M."/>
            <person name="Perez M."/>
            <person name="Agarwal P."/>
            <person name="Brodbelt J.S."/>
            <person name="Legube G."/>
            <person name="Miller K.M."/>
        </authorList>
    </citation>
    <scope>SUBCELLULAR LOCATION</scope>
</reference>
<reference key="29">
    <citation type="journal article" date="2015" name="Mol. Cell. Proteomics">
        <title>System-wide analysis of SUMOylation dynamics in response to replication stress reveals novel small ubiquitin-like modified target proteins and acceptor lysines relevant for genome stability.</title>
        <authorList>
            <person name="Xiao Z."/>
            <person name="Chang J.G."/>
            <person name="Hendriks I.A."/>
            <person name="Sigurdsson J.O."/>
            <person name="Olsen J.V."/>
            <person name="Vertegaal A.C."/>
        </authorList>
    </citation>
    <scope>SUMOYLATION [LARGE SCALE ANALYSIS] AT LYS-723</scope>
    <scope>IDENTIFICATION BY MASS SPECTROMETRY [LARGE SCALE ANALYSIS]</scope>
</reference>
<reference key="30">
    <citation type="journal article" date="2017" name="Nat. Struct. Mol. Biol.">
        <title>Site-specific mapping of the human SUMO proteome reveals co-modification with phosphorylation.</title>
        <authorList>
            <person name="Hendriks I.A."/>
            <person name="Lyon D."/>
            <person name="Young C."/>
            <person name="Jensen L.J."/>
            <person name="Vertegaal A.C."/>
            <person name="Nielsen M.L."/>
        </authorList>
    </citation>
    <scope>SUMOYLATION [LARGE SCALE ANALYSIS] AT LYS-7; LYS-205; LYS-276; LYS-436; LYS-458; LYS-552; LYS-641; LYS-702; LYS-711; LYS-723; LYS-741; LYS-801; LYS-810; LYS-875 AND LYS-992</scope>
    <scope>IDENTIFICATION BY MASS SPECTROMETRY [LARGE SCALE ANALYSIS]</scope>
</reference>
<reference key="31">
    <citation type="journal article" date="2020" name="J. Exp. Med.">
        <title>TRIM24 facilitates antiviral immunity through mediating K63-linked TRAF3 ubiquitination.</title>
        <authorList>
            <person name="Zhu Q."/>
            <person name="Yu T."/>
            <person name="Gan S."/>
            <person name="Wang Y."/>
            <person name="Pei Y."/>
            <person name="Zhao Q."/>
            <person name="Pei S."/>
            <person name="Hao S."/>
            <person name="Yuan J."/>
            <person name="Xu J."/>
            <person name="Hou F."/>
            <person name="Wu X."/>
            <person name="Peng C."/>
            <person name="Wu P."/>
            <person name="Qin J."/>
            <person name="Xiao Y."/>
        </authorList>
    </citation>
    <scope>FUNCTION</scope>
    <scope>SUBCELLULAR LOCATION</scope>
    <scope>CATALYTIC ACTIVITY</scope>
</reference>
<reference key="32">
    <citation type="journal article" date="2021" name="Cell Biol. Int.">
        <title>E3 ubiquitin ligase TRIM24 deficiency promotes NLRP3/caspase-1/IL-1beta-mediated pyroptosis in endometriosis.</title>
        <authorList>
            <person name="Hang Y."/>
            <person name="Tan L."/>
            <person name="Chen Q."/>
            <person name="Liu Q."/>
            <person name="Jin Y."/>
        </authorList>
    </citation>
    <scope>FUNCTION</scope>
</reference>
<reference key="33">
    <citation type="submission" date="2009-02" db="PDB data bank">
        <title>Crystal structure of human bromodomain protein.</title>
        <authorList>
            <consortium name="RIKEN structural genomics initiative (RSGI)"/>
        </authorList>
    </citation>
    <scope>X-RAY CRYSTALLOGRAPHY (2.5 ANGSTROMS) OF 891-1012</scope>
</reference>
<reference key="34">
    <citation type="journal article" date="2010" name="Nature">
        <title>TRIM24 links a non-canonical histone signature to breast cancer.</title>
        <authorList>
            <person name="Tsai W.W."/>
            <person name="Wang Z."/>
            <person name="Yiu T.T."/>
            <person name="Akdemir K.C."/>
            <person name="Xia W."/>
            <person name="Winter S."/>
            <person name="Tsai C.Y."/>
            <person name="Shi X."/>
            <person name="Schwarzer D."/>
            <person name="Plunkett W."/>
            <person name="Aronow B."/>
            <person name="Gozani O."/>
            <person name="Fischle W."/>
            <person name="Hung M.C."/>
            <person name="Patel D.J."/>
            <person name="Barton M.C."/>
        </authorList>
    </citation>
    <scope>X-RAY CRYSTALLOGRAPHY (1.7 ANGSTROMS) OF 824-1006 IN COMPLEXES WITH METHYLATED HISTONE PEPTIDES AND ZINC IONS</scope>
    <scope>FUNCTION</scope>
    <scope>MUTAGENESIS OF ASP-827; CYS-840 AND 979-PHE-ASN-980</scope>
    <scope>SUBCELLULAR LOCATION</scope>
    <scope>SUBUNIT</scope>
    <scope>INDUCTION</scope>
</reference>
<reference key="35">
    <citation type="journal article" date="2007" name="Nature">
        <title>Patterns of somatic mutation in human cancer genomes.</title>
        <authorList>
            <person name="Greenman C."/>
            <person name="Stephens P."/>
            <person name="Smith R."/>
            <person name="Dalgliesh G.L."/>
            <person name="Hunter C."/>
            <person name="Bignell G."/>
            <person name="Davies H."/>
            <person name="Teague J."/>
            <person name="Butler A."/>
            <person name="Stevens C."/>
            <person name="Edkins S."/>
            <person name="O'Meara S."/>
            <person name="Vastrik I."/>
            <person name="Schmidt E.E."/>
            <person name="Avis T."/>
            <person name="Barthorpe S."/>
            <person name="Bhamra G."/>
            <person name="Buck G."/>
            <person name="Choudhury B."/>
            <person name="Clements J."/>
            <person name="Cole J."/>
            <person name="Dicks E."/>
            <person name="Forbes S."/>
            <person name="Gray K."/>
            <person name="Halliday K."/>
            <person name="Harrison R."/>
            <person name="Hills K."/>
            <person name="Hinton J."/>
            <person name="Jenkinson A."/>
            <person name="Jones D."/>
            <person name="Menzies A."/>
            <person name="Mironenko T."/>
            <person name="Perry J."/>
            <person name="Raine K."/>
            <person name="Richardson D."/>
            <person name="Shepherd R."/>
            <person name="Small A."/>
            <person name="Tofts C."/>
            <person name="Varian J."/>
            <person name="Webb T."/>
            <person name="West S."/>
            <person name="Widaa S."/>
            <person name="Yates A."/>
            <person name="Cahill D.P."/>
            <person name="Louis D.N."/>
            <person name="Goldstraw P."/>
            <person name="Nicholson A.G."/>
            <person name="Brasseur F."/>
            <person name="Looijenga L."/>
            <person name="Weber B.L."/>
            <person name="Chiew Y.-E."/>
            <person name="DeFazio A."/>
            <person name="Greaves M.F."/>
            <person name="Green A.R."/>
            <person name="Campbell P."/>
            <person name="Birney E."/>
            <person name="Easton D.F."/>
            <person name="Chenevix-Trench G."/>
            <person name="Tan M.-H."/>
            <person name="Khoo S.K."/>
            <person name="Teh B.T."/>
            <person name="Yuen S.T."/>
            <person name="Leung S.Y."/>
            <person name="Wooster R."/>
            <person name="Futreal P.A."/>
            <person name="Stratton M.R."/>
        </authorList>
    </citation>
    <scope>VARIANTS [LARGE SCALE ANALYSIS] THR-320; ASN-403; ASN-762 AND SER-1009</scope>
</reference>
<dbReference type="EC" id="2.3.2.27" evidence="17 19"/>
<dbReference type="EMBL" id="AF009353">
    <property type="protein sequence ID" value="AAB63585.1"/>
    <property type="molecule type" value="mRNA"/>
</dbReference>
<dbReference type="EMBL" id="AF119042">
    <property type="protein sequence ID" value="AAD17258.1"/>
    <property type="molecule type" value="mRNA"/>
</dbReference>
<dbReference type="EMBL" id="AK075306">
    <property type="protein sequence ID" value="BAG52105.1"/>
    <property type="molecule type" value="mRNA"/>
</dbReference>
<dbReference type="EMBL" id="AC008265">
    <property type="status" value="NOT_ANNOTATED_CDS"/>
    <property type="molecule type" value="Genomic_DNA"/>
</dbReference>
<dbReference type="EMBL" id="AC013429">
    <property type="status" value="NOT_ANNOTATED_CDS"/>
    <property type="molecule type" value="Genomic_DNA"/>
</dbReference>
<dbReference type="EMBL" id="CH236950">
    <property type="protein sequence ID" value="EAL24046.1"/>
    <property type="molecule type" value="Genomic_DNA"/>
</dbReference>
<dbReference type="EMBL" id="CH236950">
    <property type="protein sequence ID" value="EAL24047.1"/>
    <property type="molecule type" value="Genomic_DNA"/>
</dbReference>
<dbReference type="EMBL" id="CH471070">
    <property type="protein sequence ID" value="EAW83884.1"/>
    <property type="molecule type" value="Genomic_DNA"/>
</dbReference>
<dbReference type="EMBL" id="CH471070">
    <property type="protein sequence ID" value="EAW83885.1"/>
    <property type="molecule type" value="Genomic_DNA"/>
</dbReference>
<dbReference type="EMBL" id="BC028689">
    <property type="protein sequence ID" value="AAH28689.2"/>
    <property type="molecule type" value="mRNA"/>
</dbReference>
<dbReference type="CCDS" id="CCDS47720.1">
    <molecule id="O15164-2"/>
</dbReference>
<dbReference type="CCDS" id="CCDS5847.1">
    <molecule id="O15164-1"/>
</dbReference>
<dbReference type="RefSeq" id="NP_003843.3">
    <molecule id="O15164-2"/>
    <property type="nucleotide sequence ID" value="NM_003852.3"/>
</dbReference>
<dbReference type="RefSeq" id="NP_056989.2">
    <molecule id="O15164-1"/>
    <property type="nucleotide sequence ID" value="NM_015905.2"/>
</dbReference>
<dbReference type="PDB" id="2YYN">
    <property type="method" value="X-ray"/>
    <property type="resolution" value="2.50 A"/>
    <property type="chains" value="A/B/C/D=891-1012"/>
</dbReference>
<dbReference type="PDB" id="3O33">
    <property type="method" value="X-ray"/>
    <property type="resolution" value="2.00 A"/>
    <property type="chains" value="A/B/C/D=824-1006"/>
</dbReference>
<dbReference type="PDB" id="3O34">
    <property type="method" value="X-ray"/>
    <property type="resolution" value="1.90 A"/>
    <property type="chains" value="A=824-1006"/>
</dbReference>
<dbReference type="PDB" id="3O35">
    <property type="method" value="X-ray"/>
    <property type="resolution" value="1.76 A"/>
    <property type="chains" value="A/B=824-1006"/>
</dbReference>
<dbReference type="PDB" id="3O36">
    <property type="method" value="X-ray"/>
    <property type="resolution" value="1.70 A"/>
    <property type="chains" value="A/B=824-1006"/>
</dbReference>
<dbReference type="PDB" id="3O37">
    <property type="method" value="X-ray"/>
    <property type="resolution" value="2.00 A"/>
    <property type="chains" value="A/B/C/D=824-1006"/>
</dbReference>
<dbReference type="PDB" id="4YAB">
    <property type="method" value="X-ray"/>
    <property type="resolution" value="1.90 A"/>
    <property type="chains" value="A/B=824-1006"/>
</dbReference>
<dbReference type="PDB" id="4YAD">
    <property type="method" value="X-ray"/>
    <property type="resolution" value="1.73 A"/>
    <property type="chains" value="A/B=824-1006"/>
</dbReference>
<dbReference type="PDB" id="4YAT">
    <property type="method" value="X-ray"/>
    <property type="resolution" value="2.18 A"/>
    <property type="chains" value="A/B=824-1006"/>
</dbReference>
<dbReference type="PDB" id="4YAX">
    <property type="method" value="X-ray"/>
    <property type="resolution" value="2.25 A"/>
    <property type="chains" value="A/B=824-1006"/>
</dbReference>
<dbReference type="PDB" id="4YBM">
    <property type="method" value="X-ray"/>
    <property type="resolution" value="1.46 A"/>
    <property type="chains" value="A/B=824-1006"/>
</dbReference>
<dbReference type="PDB" id="4YBS">
    <property type="method" value="X-ray"/>
    <property type="resolution" value="1.83 A"/>
    <property type="chains" value="A=824-1006"/>
</dbReference>
<dbReference type="PDB" id="4YBT">
    <property type="method" value="X-ray"/>
    <property type="resolution" value="1.82 A"/>
    <property type="chains" value="A=824-1006"/>
</dbReference>
<dbReference type="PDB" id="4YC9">
    <property type="method" value="X-ray"/>
    <property type="resolution" value="1.82 A"/>
    <property type="chains" value="A=824-1006"/>
</dbReference>
<dbReference type="PDB" id="4ZQL">
    <property type="method" value="X-ray"/>
    <property type="resolution" value="1.79 A"/>
    <property type="chains" value="A/B=825-1006"/>
</dbReference>
<dbReference type="PDB" id="5H1T">
    <property type="method" value="X-ray"/>
    <property type="resolution" value="1.95 A"/>
    <property type="chains" value="A/B/C/D=824-1006"/>
</dbReference>
<dbReference type="PDB" id="5H1U">
    <property type="method" value="X-ray"/>
    <property type="resolution" value="1.90 A"/>
    <property type="chains" value="A/B/C/D=824-1006"/>
</dbReference>
<dbReference type="PDB" id="5H1V">
    <property type="method" value="X-ray"/>
    <property type="resolution" value="2.00 A"/>
    <property type="chains" value="A/B=824-1006"/>
</dbReference>
<dbReference type="PDB" id="7B9X">
    <property type="method" value="NMR"/>
    <property type="chains" value="A=901-1006"/>
</dbReference>
<dbReference type="PDBsum" id="2YYN"/>
<dbReference type="PDBsum" id="3O33"/>
<dbReference type="PDBsum" id="3O34"/>
<dbReference type="PDBsum" id="3O35"/>
<dbReference type="PDBsum" id="3O36"/>
<dbReference type="PDBsum" id="3O37"/>
<dbReference type="PDBsum" id="4YAB"/>
<dbReference type="PDBsum" id="4YAD"/>
<dbReference type="PDBsum" id="4YAT"/>
<dbReference type="PDBsum" id="4YAX"/>
<dbReference type="PDBsum" id="4YBM"/>
<dbReference type="PDBsum" id="4YBS"/>
<dbReference type="PDBsum" id="4YBT"/>
<dbReference type="PDBsum" id="4YC9"/>
<dbReference type="PDBsum" id="4ZQL"/>
<dbReference type="PDBsum" id="5H1T"/>
<dbReference type="PDBsum" id="5H1U"/>
<dbReference type="PDBsum" id="5H1V"/>
<dbReference type="PDBsum" id="7B9X"/>
<dbReference type="SMR" id="O15164"/>
<dbReference type="BioGRID" id="114333">
    <property type="interactions" value="386"/>
</dbReference>
<dbReference type="CORUM" id="O15164"/>
<dbReference type="DIP" id="DIP-52713N"/>
<dbReference type="ELM" id="O15164"/>
<dbReference type="FunCoup" id="O15164">
    <property type="interactions" value="3865"/>
</dbReference>
<dbReference type="IntAct" id="O15164">
    <property type="interactions" value="187"/>
</dbReference>
<dbReference type="MINT" id="O15164"/>
<dbReference type="STRING" id="9606.ENSP00000340507"/>
<dbReference type="BindingDB" id="O15164"/>
<dbReference type="ChEMBL" id="CHEMBL3108638"/>
<dbReference type="GuidetoPHARMACOLOGY" id="2252"/>
<dbReference type="GlyGen" id="O15164">
    <property type="glycosylation" value="2 sites, 1 O-linked glycan (1 site)"/>
</dbReference>
<dbReference type="iPTMnet" id="O15164"/>
<dbReference type="MetOSite" id="O15164"/>
<dbReference type="PhosphoSitePlus" id="O15164"/>
<dbReference type="SwissPalm" id="O15164"/>
<dbReference type="BioMuta" id="TRIM24"/>
<dbReference type="jPOST" id="O15164"/>
<dbReference type="MassIVE" id="O15164"/>
<dbReference type="PaxDb" id="9606-ENSP00000340507"/>
<dbReference type="PeptideAtlas" id="O15164"/>
<dbReference type="ProteomicsDB" id="48484">
    <molecule id="O15164-1"/>
</dbReference>
<dbReference type="ProteomicsDB" id="48485">
    <molecule id="O15164-2"/>
</dbReference>
<dbReference type="Pumba" id="O15164"/>
<dbReference type="ABCD" id="O15164">
    <property type="antibodies" value="1 sequenced antibody"/>
</dbReference>
<dbReference type="Antibodypedia" id="32326">
    <property type="antibodies" value="577 antibodies from 38 providers"/>
</dbReference>
<dbReference type="DNASU" id="8805"/>
<dbReference type="Ensembl" id="ENST00000343526.9">
    <molecule id="O15164-1"/>
    <property type="protein sequence ID" value="ENSP00000340507.4"/>
    <property type="gene ID" value="ENSG00000122779.18"/>
</dbReference>
<dbReference type="Ensembl" id="ENST00000415680.6">
    <molecule id="O15164-2"/>
    <property type="protein sequence ID" value="ENSP00000390829.2"/>
    <property type="gene ID" value="ENSG00000122779.18"/>
</dbReference>
<dbReference type="GeneID" id="8805"/>
<dbReference type="KEGG" id="hsa:8805"/>
<dbReference type="MANE-Select" id="ENST00000343526.9">
    <property type="protein sequence ID" value="ENSP00000340507.4"/>
    <property type="RefSeq nucleotide sequence ID" value="NM_015905.3"/>
    <property type="RefSeq protein sequence ID" value="NP_056989.2"/>
</dbReference>
<dbReference type="UCSC" id="uc003vub.4">
    <molecule id="O15164-1"/>
    <property type="organism name" value="human"/>
</dbReference>
<dbReference type="AGR" id="HGNC:11812"/>
<dbReference type="CTD" id="8805"/>
<dbReference type="DisGeNET" id="8805"/>
<dbReference type="GeneCards" id="TRIM24"/>
<dbReference type="HGNC" id="HGNC:11812">
    <property type="gene designation" value="TRIM24"/>
</dbReference>
<dbReference type="HPA" id="ENSG00000122779">
    <property type="expression patterns" value="Low tissue specificity"/>
</dbReference>
<dbReference type="MalaCards" id="TRIM24"/>
<dbReference type="MIM" id="603406">
    <property type="type" value="gene"/>
</dbReference>
<dbReference type="neXtProt" id="NX_O15164"/>
<dbReference type="OpenTargets" id="ENSG00000122779"/>
<dbReference type="Orphanet" id="146">
    <property type="disease" value="Differentiated thyroid carcinoma"/>
</dbReference>
<dbReference type="PharmGKB" id="PA36519"/>
<dbReference type="VEuPathDB" id="HostDB:ENSG00000122779"/>
<dbReference type="eggNOG" id="KOG2177">
    <property type="taxonomic scope" value="Eukaryota"/>
</dbReference>
<dbReference type="GeneTree" id="ENSGT00940000159863"/>
<dbReference type="HOGENOM" id="CLU_005817_0_1_1"/>
<dbReference type="InParanoid" id="O15164"/>
<dbReference type="OMA" id="AIKQWQV"/>
<dbReference type="OrthoDB" id="1870062at2759"/>
<dbReference type="PAN-GO" id="O15164">
    <property type="GO annotations" value="0 GO annotations based on evolutionary models"/>
</dbReference>
<dbReference type="PhylomeDB" id="O15164"/>
<dbReference type="TreeFam" id="TF106455"/>
<dbReference type="PathwayCommons" id="O15164"/>
<dbReference type="Reactome" id="R-HSA-1839117">
    <property type="pathway name" value="Signaling by cytosolic FGFR1 fusion mutants"/>
</dbReference>
<dbReference type="Reactome" id="R-HSA-5655302">
    <property type="pathway name" value="Signaling by FGFR1 in disease"/>
</dbReference>
<dbReference type="Reactome" id="R-HSA-6802952">
    <property type="pathway name" value="Signaling by BRAF and RAF1 fusions"/>
</dbReference>
<dbReference type="SignaLink" id="O15164"/>
<dbReference type="SIGNOR" id="O15164"/>
<dbReference type="UniPathway" id="UPA00143"/>
<dbReference type="BioGRID-ORCS" id="8805">
    <property type="hits" value="33 hits in 1220 CRISPR screens"/>
</dbReference>
<dbReference type="ChiTaRS" id="TRIM24">
    <property type="organism name" value="human"/>
</dbReference>
<dbReference type="EvolutionaryTrace" id="O15164"/>
<dbReference type="GeneWiki" id="TRIM24"/>
<dbReference type="GenomeRNAi" id="8805"/>
<dbReference type="Pharos" id="O15164">
    <property type="development level" value="Tchem"/>
</dbReference>
<dbReference type="PRO" id="PR:O15164"/>
<dbReference type="Proteomes" id="UP000005640">
    <property type="component" value="Chromosome 7"/>
</dbReference>
<dbReference type="RNAct" id="O15164">
    <property type="molecule type" value="protein"/>
</dbReference>
<dbReference type="Bgee" id="ENSG00000122779">
    <property type="expression patterns" value="Expressed in sperm and 213 other cell types or tissues"/>
</dbReference>
<dbReference type="ExpressionAtlas" id="O15164">
    <property type="expression patterns" value="baseline and differential"/>
</dbReference>
<dbReference type="GO" id="GO:0000785">
    <property type="term" value="C:chromatin"/>
    <property type="evidence" value="ECO:0000318"/>
    <property type="project" value="GO_Central"/>
</dbReference>
<dbReference type="GO" id="GO:0005829">
    <property type="term" value="C:cytosol"/>
    <property type="evidence" value="ECO:0000304"/>
    <property type="project" value="Reactome"/>
</dbReference>
<dbReference type="GO" id="GO:0000791">
    <property type="term" value="C:euchromatin"/>
    <property type="evidence" value="ECO:0007669"/>
    <property type="project" value="Ensembl"/>
</dbReference>
<dbReference type="GO" id="GO:0001673">
    <property type="term" value="C:male germ cell nucleus"/>
    <property type="evidence" value="ECO:0007669"/>
    <property type="project" value="Ensembl"/>
</dbReference>
<dbReference type="GO" id="GO:0005739">
    <property type="term" value="C:mitochondrion"/>
    <property type="evidence" value="ECO:0007669"/>
    <property type="project" value="UniProtKB-SubCell"/>
</dbReference>
<dbReference type="GO" id="GO:0005654">
    <property type="term" value="C:nucleoplasm"/>
    <property type="evidence" value="ECO:0000314"/>
    <property type="project" value="HPA"/>
</dbReference>
<dbReference type="GO" id="GO:0005634">
    <property type="term" value="C:nucleus"/>
    <property type="evidence" value="ECO:0000314"/>
    <property type="project" value="UniProtKB"/>
</dbReference>
<dbReference type="GO" id="GO:0005726">
    <property type="term" value="C:perichromatin fibrils"/>
    <property type="evidence" value="ECO:0007669"/>
    <property type="project" value="Ensembl"/>
</dbReference>
<dbReference type="GO" id="GO:0003682">
    <property type="term" value="F:chromatin binding"/>
    <property type="evidence" value="ECO:0000314"/>
    <property type="project" value="UniProtKB"/>
</dbReference>
<dbReference type="GO" id="GO:0034056">
    <property type="term" value="F:estrogen response element binding"/>
    <property type="evidence" value="ECO:0000314"/>
    <property type="project" value="UniProtKB"/>
</dbReference>
<dbReference type="GO" id="GO:0070577">
    <property type="term" value="F:lysine-acetylated histone binding"/>
    <property type="evidence" value="ECO:0000314"/>
    <property type="project" value="UniProtKB"/>
</dbReference>
<dbReference type="GO" id="GO:0016922">
    <property type="term" value="F:nuclear receptor binding"/>
    <property type="evidence" value="ECO:0007669"/>
    <property type="project" value="Ensembl"/>
</dbReference>
<dbReference type="GO" id="GO:0002039">
    <property type="term" value="F:p53 binding"/>
    <property type="evidence" value="ECO:0000353"/>
    <property type="project" value="UniProtKB"/>
</dbReference>
<dbReference type="GO" id="GO:0004672">
    <property type="term" value="F:protein kinase activity"/>
    <property type="evidence" value="ECO:0007669"/>
    <property type="project" value="Ensembl"/>
</dbReference>
<dbReference type="GO" id="GO:0005102">
    <property type="term" value="F:signaling receptor binding"/>
    <property type="evidence" value="ECO:0000304"/>
    <property type="project" value="ProtInc"/>
</dbReference>
<dbReference type="GO" id="GO:0003713">
    <property type="term" value="F:transcription coactivator activity"/>
    <property type="evidence" value="ECO:0000314"/>
    <property type="project" value="UniProtKB"/>
</dbReference>
<dbReference type="GO" id="GO:0061630">
    <property type="term" value="F:ubiquitin protein ligase activity"/>
    <property type="evidence" value="ECO:0000314"/>
    <property type="project" value="UniProtKB"/>
</dbReference>
<dbReference type="GO" id="GO:0008270">
    <property type="term" value="F:zinc ion binding"/>
    <property type="evidence" value="ECO:0000314"/>
    <property type="project" value="UniProtKB"/>
</dbReference>
<dbReference type="GO" id="GO:0055074">
    <property type="term" value="P:calcium ion homeostasis"/>
    <property type="evidence" value="ECO:0007669"/>
    <property type="project" value="Ensembl"/>
</dbReference>
<dbReference type="GO" id="GO:0071391">
    <property type="term" value="P:cellular response to estrogen stimulus"/>
    <property type="evidence" value="ECO:0000314"/>
    <property type="project" value="UniProtKB"/>
</dbReference>
<dbReference type="GO" id="GO:0050673">
    <property type="term" value="P:epithelial cell proliferation"/>
    <property type="evidence" value="ECO:0007669"/>
    <property type="project" value="Ensembl"/>
</dbReference>
<dbReference type="GO" id="GO:0045892">
    <property type="term" value="P:negative regulation of DNA-templated transcription"/>
    <property type="evidence" value="ECO:0007669"/>
    <property type="project" value="Ensembl"/>
</dbReference>
<dbReference type="GO" id="GO:0050680">
    <property type="term" value="P:negative regulation of epithelial cell proliferation"/>
    <property type="evidence" value="ECO:0007669"/>
    <property type="project" value="Ensembl"/>
</dbReference>
<dbReference type="GO" id="GO:0010628">
    <property type="term" value="P:positive regulation of gene expression"/>
    <property type="evidence" value="ECO:0007669"/>
    <property type="project" value="Ensembl"/>
</dbReference>
<dbReference type="GO" id="GO:0030163">
    <property type="term" value="P:protein catabolic process"/>
    <property type="evidence" value="ECO:0000315"/>
    <property type="project" value="UniProtKB"/>
</dbReference>
<dbReference type="GO" id="GO:0016567">
    <property type="term" value="P:protein ubiquitination"/>
    <property type="evidence" value="ECO:0000314"/>
    <property type="project" value="UniProtKB"/>
</dbReference>
<dbReference type="GO" id="GO:0042981">
    <property type="term" value="P:regulation of apoptotic process"/>
    <property type="evidence" value="ECO:0000315"/>
    <property type="project" value="UniProtKB"/>
</dbReference>
<dbReference type="GO" id="GO:0031647">
    <property type="term" value="P:regulation of protein stability"/>
    <property type="evidence" value="ECO:0000315"/>
    <property type="project" value="UniProtKB"/>
</dbReference>
<dbReference type="GO" id="GO:1901796">
    <property type="term" value="P:regulation of signal transduction by p53 class mediator"/>
    <property type="evidence" value="ECO:0007669"/>
    <property type="project" value="Ensembl"/>
</dbReference>
<dbReference type="GO" id="GO:0070562">
    <property type="term" value="P:regulation of vitamin D receptor signaling pathway"/>
    <property type="evidence" value="ECO:0007669"/>
    <property type="project" value="Ensembl"/>
</dbReference>
<dbReference type="GO" id="GO:0043434">
    <property type="term" value="P:response to peptide hormone"/>
    <property type="evidence" value="ECO:0007669"/>
    <property type="project" value="Ensembl"/>
</dbReference>
<dbReference type="GO" id="GO:0006366">
    <property type="term" value="P:transcription by RNA polymerase II"/>
    <property type="evidence" value="ECO:0000304"/>
    <property type="project" value="ProtInc"/>
</dbReference>
<dbReference type="CDD" id="cd19845">
    <property type="entry name" value="Bbox1_TIF1a_C-VI"/>
    <property type="match status" value="1"/>
</dbReference>
<dbReference type="CDD" id="cd19828">
    <property type="entry name" value="Bbox2_TIF1a_C-VI"/>
    <property type="match status" value="1"/>
</dbReference>
<dbReference type="CDD" id="cd05502">
    <property type="entry name" value="Bromo_tif1_like"/>
    <property type="match status" value="1"/>
</dbReference>
<dbReference type="CDD" id="cd15622">
    <property type="entry name" value="PHD_TIF1alpha"/>
    <property type="match status" value="1"/>
</dbReference>
<dbReference type="CDD" id="cd16764">
    <property type="entry name" value="RING-HC_TIF1alpha"/>
    <property type="match status" value="1"/>
</dbReference>
<dbReference type="FunFam" id="3.30.40.10:FF:000123">
    <property type="entry name" value="E3 ubiquitin-protein ligase TRIM33"/>
    <property type="match status" value="1"/>
</dbReference>
<dbReference type="FunFam" id="1.20.920.10:FF:000024">
    <property type="entry name" value="Transcription intermediary factor 1-alpha"/>
    <property type="match status" value="1"/>
</dbReference>
<dbReference type="FunFam" id="3.30.40.10:FF:000379">
    <property type="entry name" value="transcription intermediary factor 1-alpha isoform X1"/>
    <property type="match status" value="1"/>
</dbReference>
<dbReference type="FunFam" id="3.30.160.60:FF:000074">
    <property type="entry name" value="Tripartite motif containing 66"/>
    <property type="match status" value="1"/>
</dbReference>
<dbReference type="Gene3D" id="1.20.920.10">
    <property type="entry name" value="Bromodomain-like"/>
    <property type="match status" value="1"/>
</dbReference>
<dbReference type="Gene3D" id="3.30.160.60">
    <property type="entry name" value="Classic Zinc Finger"/>
    <property type="match status" value="1"/>
</dbReference>
<dbReference type="Gene3D" id="3.30.40.10">
    <property type="entry name" value="Zinc/RING finger domain, C3HC4 (zinc finger)"/>
    <property type="match status" value="2"/>
</dbReference>
<dbReference type="IDEAL" id="IID00289"/>
<dbReference type="InterPro" id="IPR003649">
    <property type="entry name" value="Bbox_C"/>
</dbReference>
<dbReference type="InterPro" id="IPR001487">
    <property type="entry name" value="Bromodomain"/>
</dbReference>
<dbReference type="InterPro" id="IPR036427">
    <property type="entry name" value="Bromodomain-like_sf"/>
</dbReference>
<dbReference type="InterPro" id="IPR018359">
    <property type="entry name" value="Bromodomain_CS"/>
</dbReference>
<dbReference type="InterPro" id="IPR019786">
    <property type="entry name" value="Zinc_finger_PHD-type_CS"/>
</dbReference>
<dbReference type="InterPro" id="IPR000315">
    <property type="entry name" value="Znf_B-box"/>
</dbReference>
<dbReference type="InterPro" id="IPR011011">
    <property type="entry name" value="Znf_FYVE_PHD"/>
</dbReference>
<dbReference type="InterPro" id="IPR001965">
    <property type="entry name" value="Znf_PHD"/>
</dbReference>
<dbReference type="InterPro" id="IPR019787">
    <property type="entry name" value="Znf_PHD-finger"/>
</dbReference>
<dbReference type="InterPro" id="IPR001841">
    <property type="entry name" value="Znf_RING"/>
</dbReference>
<dbReference type="InterPro" id="IPR013083">
    <property type="entry name" value="Znf_RING/FYVE/PHD"/>
</dbReference>
<dbReference type="InterPro" id="IPR017907">
    <property type="entry name" value="Znf_RING_CS"/>
</dbReference>
<dbReference type="PANTHER" id="PTHR45915">
    <property type="entry name" value="TRANSCRIPTION INTERMEDIARY FACTOR"/>
    <property type="match status" value="1"/>
</dbReference>
<dbReference type="PANTHER" id="PTHR45915:SF4">
    <property type="entry name" value="TRANSCRIPTION INTERMEDIARY FACTOR 1-ALPHA"/>
    <property type="match status" value="1"/>
</dbReference>
<dbReference type="Pfam" id="PF00439">
    <property type="entry name" value="Bromodomain"/>
    <property type="match status" value="1"/>
</dbReference>
<dbReference type="Pfam" id="PF00628">
    <property type="entry name" value="PHD"/>
    <property type="match status" value="1"/>
</dbReference>
<dbReference type="Pfam" id="PF00643">
    <property type="entry name" value="zf-B_box"/>
    <property type="match status" value="1"/>
</dbReference>
<dbReference type="PRINTS" id="PR00503">
    <property type="entry name" value="BROMODOMAIN"/>
</dbReference>
<dbReference type="SMART" id="SM00502">
    <property type="entry name" value="BBC"/>
    <property type="match status" value="1"/>
</dbReference>
<dbReference type="SMART" id="SM00336">
    <property type="entry name" value="BBOX"/>
    <property type="match status" value="2"/>
</dbReference>
<dbReference type="SMART" id="SM00297">
    <property type="entry name" value="BROMO"/>
    <property type="match status" value="1"/>
</dbReference>
<dbReference type="SMART" id="SM00249">
    <property type="entry name" value="PHD"/>
    <property type="match status" value="1"/>
</dbReference>
<dbReference type="SMART" id="SM00184">
    <property type="entry name" value="RING"/>
    <property type="match status" value="1"/>
</dbReference>
<dbReference type="SUPFAM" id="SSF57845">
    <property type="entry name" value="B-box zinc-binding domain"/>
    <property type="match status" value="1"/>
</dbReference>
<dbReference type="SUPFAM" id="SSF47370">
    <property type="entry name" value="Bromodomain"/>
    <property type="match status" value="1"/>
</dbReference>
<dbReference type="SUPFAM" id="SSF57903">
    <property type="entry name" value="FYVE/PHD zinc finger"/>
    <property type="match status" value="1"/>
</dbReference>
<dbReference type="SUPFAM" id="SSF57850">
    <property type="entry name" value="RING/U-box"/>
    <property type="match status" value="1"/>
</dbReference>
<dbReference type="PROSITE" id="PS00633">
    <property type="entry name" value="BROMODOMAIN_1"/>
    <property type="match status" value="1"/>
</dbReference>
<dbReference type="PROSITE" id="PS50014">
    <property type="entry name" value="BROMODOMAIN_2"/>
    <property type="match status" value="1"/>
</dbReference>
<dbReference type="PROSITE" id="PS50119">
    <property type="entry name" value="ZF_BBOX"/>
    <property type="match status" value="2"/>
</dbReference>
<dbReference type="PROSITE" id="PS01359">
    <property type="entry name" value="ZF_PHD_1"/>
    <property type="match status" value="1"/>
</dbReference>
<dbReference type="PROSITE" id="PS50016">
    <property type="entry name" value="ZF_PHD_2"/>
    <property type="match status" value="1"/>
</dbReference>
<dbReference type="PROSITE" id="PS00518">
    <property type="entry name" value="ZF_RING_1"/>
    <property type="match status" value="1"/>
</dbReference>
<dbReference type="PROSITE" id="PS50089">
    <property type="entry name" value="ZF_RING_2"/>
    <property type="match status" value="1"/>
</dbReference>
<accession>O15164</accession>
<accession>A4D1R7</accession>
<accession>A4D1R8</accession>
<accession>O95854</accession>
<feature type="chain" id="PRO_0000056390" description="Transcription intermediary factor 1-alpha">
    <location>
        <begin position="1"/>
        <end position="1050"/>
    </location>
</feature>
<feature type="domain" description="Bromo" evidence="5">
    <location>
        <begin position="899"/>
        <end position="1004"/>
    </location>
</feature>
<feature type="zinc finger region" description="RING-type" evidence="7">
    <location>
        <begin position="56"/>
        <end position="82"/>
    </location>
</feature>
<feature type="zinc finger region" description="B box-type 1" evidence="4">
    <location>
        <begin position="158"/>
        <end position="211"/>
    </location>
</feature>
<feature type="zinc finger region" description="B box-type 2" evidence="4">
    <location>
        <begin position="218"/>
        <end position="259"/>
    </location>
</feature>
<feature type="zinc finger region" description="PHD-type" evidence="6">
    <location>
        <begin position="826"/>
        <end position="873"/>
    </location>
</feature>
<feature type="region of interest" description="Disordered" evidence="8">
    <location>
        <begin position="15"/>
        <end position="44"/>
    </location>
</feature>
<feature type="region of interest" description="Disordered" evidence="8">
    <location>
        <begin position="429"/>
        <end position="456"/>
    </location>
</feature>
<feature type="region of interest" description="Disordered" evidence="8">
    <location>
        <begin position="476"/>
        <end position="550"/>
    </location>
</feature>
<feature type="region of interest" description="Disordered" evidence="8">
    <location>
        <begin position="571"/>
        <end position="594"/>
    </location>
</feature>
<feature type="region of interest" description="Disordered" evidence="8">
    <location>
        <begin position="643"/>
        <end position="712"/>
    </location>
</feature>
<feature type="region of interest" description="Nuclear receptor binding site (NRBS)">
    <location>
        <begin position="754"/>
        <end position="779"/>
    </location>
</feature>
<feature type="region of interest" description="Disordered" evidence="8">
    <location>
        <begin position="766"/>
        <end position="824"/>
    </location>
</feature>
<feature type="region of interest" description="Interaction with histone H3 that is not methylated at 'Lys-4' (H3K4me0)">
    <location>
        <begin position="834"/>
        <end position="840"/>
    </location>
</feature>
<feature type="region of interest" description="Interaction with histone H3 that is acetylated at 'Lys-23' (H3K23ac)">
    <location>
        <begin position="979"/>
        <end position="980"/>
    </location>
</feature>
<feature type="region of interest" description="Disordered" evidence="8">
    <location>
        <begin position="1011"/>
        <end position="1036"/>
    </location>
</feature>
<feature type="coiled-coil region" evidence="3">
    <location>
        <begin position="289"/>
        <end position="359"/>
    </location>
</feature>
<feature type="short sequence motif" description="Nuclear localization signal" evidence="3">
    <location>
        <begin position="891"/>
        <end position="907"/>
    </location>
</feature>
<feature type="compositionally biased region" description="Low complexity" evidence="8">
    <location>
        <begin position="15"/>
        <end position="30"/>
    </location>
</feature>
<feature type="compositionally biased region" description="Basic and acidic residues" evidence="8">
    <location>
        <begin position="33"/>
        <end position="44"/>
    </location>
</feature>
<feature type="compositionally biased region" description="Polar residues" evidence="8">
    <location>
        <begin position="431"/>
        <end position="456"/>
    </location>
</feature>
<feature type="compositionally biased region" description="Low complexity" evidence="8">
    <location>
        <begin position="476"/>
        <end position="490"/>
    </location>
</feature>
<feature type="compositionally biased region" description="Low complexity" evidence="8">
    <location>
        <begin position="499"/>
        <end position="510"/>
    </location>
</feature>
<feature type="compositionally biased region" description="Pro residues" evidence="8">
    <location>
        <begin position="526"/>
        <end position="535"/>
    </location>
</feature>
<feature type="compositionally biased region" description="Low complexity" evidence="8">
    <location>
        <begin position="577"/>
        <end position="594"/>
    </location>
</feature>
<feature type="compositionally biased region" description="Polar residues" evidence="8">
    <location>
        <begin position="654"/>
        <end position="666"/>
    </location>
</feature>
<feature type="compositionally biased region" description="Low complexity" evidence="8">
    <location>
        <begin position="685"/>
        <end position="707"/>
    </location>
</feature>
<feature type="compositionally biased region" description="Basic and acidic residues" evidence="8">
    <location>
        <begin position="1011"/>
        <end position="1026"/>
    </location>
</feature>
<feature type="binding site" evidence="4">
    <location>
        <position position="163"/>
    </location>
    <ligand>
        <name>Zn(2+)</name>
        <dbReference type="ChEBI" id="CHEBI:29105"/>
        <label>1</label>
    </ligand>
</feature>
<feature type="binding site" evidence="4">
    <location>
        <position position="166"/>
    </location>
    <ligand>
        <name>Zn(2+)</name>
        <dbReference type="ChEBI" id="CHEBI:29105"/>
        <label>1</label>
    </ligand>
</feature>
<feature type="binding site" evidence="4">
    <location>
        <position position="187"/>
    </location>
    <ligand>
        <name>Zn(2+)</name>
        <dbReference type="ChEBI" id="CHEBI:29105"/>
        <label>1</label>
    </ligand>
</feature>
<feature type="binding site" evidence="4">
    <location>
        <position position="200"/>
    </location>
    <ligand>
        <name>Zn(2+)</name>
        <dbReference type="ChEBI" id="CHEBI:29105"/>
        <label>1</label>
    </ligand>
</feature>
<feature type="binding site" evidence="4">
    <location>
        <position position="223"/>
    </location>
    <ligand>
        <name>Zn(2+)</name>
        <dbReference type="ChEBI" id="CHEBI:29105"/>
        <label>2</label>
    </ligand>
</feature>
<feature type="binding site" evidence="4">
    <location>
        <position position="226"/>
    </location>
    <ligand>
        <name>Zn(2+)</name>
        <dbReference type="ChEBI" id="CHEBI:29105"/>
        <label>2</label>
    </ligand>
</feature>
<feature type="binding site" evidence="4">
    <location>
        <position position="246"/>
    </location>
    <ligand>
        <name>Zn(2+)</name>
        <dbReference type="ChEBI" id="CHEBI:29105"/>
        <label>2</label>
    </ligand>
</feature>
<feature type="binding site" evidence="4">
    <location>
        <position position="251"/>
    </location>
    <ligand>
        <name>Zn(2+)</name>
        <dbReference type="ChEBI" id="CHEBI:29105"/>
        <label>2</label>
    </ligand>
</feature>
<feature type="site" description="Breakpoint for translocation to form TRIM24-RET oncogene">
    <location>
        <begin position="476"/>
        <end position="477"/>
    </location>
</feature>
<feature type="site" description="Interaction with histone H3 that is not methylated at 'Lys-4' (H3K4me0)">
    <location>
        <position position="827"/>
    </location>
</feature>
<feature type="modified residue" description="Phosphothreonine" evidence="28">
    <location>
        <position position="101"/>
    </location>
</feature>
<feature type="modified residue" description="Phosphoserine" evidence="28">
    <location>
        <position position="110"/>
    </location>
</feature>
<feature type="modified residue" description="Omega-N-methylarginine" evidence="2">
    <location>
        <position position="469"/>
    </location>
</feature>
<feature type="modified residue" description="Phosphoserine" evidence="30">
    <location>
        <position position="654"/>
    </location>
</feature>
<feature type="modified residue" description="Phosphoserine" evidence="2">
    <location>
        <position position="660"/>
    </location>
</feature>
<feature type="modified residue" description="Phosphoserine" evidence="26">
    <location>
        <position position="667"/>
    </location>
</feature>
<feature type="modified residue" description="Phosphoserine" evidence="29 30">
    <location>
        <position position="744"/>
    </location>
</feature>
<feature type="modified residue" description="Phosphoserine; by ATM" evidence="17 26 28">
    <location>
        <position position="768"/>
    </location>
</feature>
<feature type="modified residue" description="Phosphoserine" evidence="26">
    <location>
        <position position="808"/>
    </location>
</feature>
<feature type="modified residue" description="Phosphoserine" evidence="25 26 28 29 30">
    <location>
        <position position="811"/>
    </location>
</feature>
<feature type="modified residue" description="Phosphothreonine" evidence="29">
    <location>
        <position position="818"/>
    </location>
</feature>
<feature type="modified residue" description="Phosphoserine" evidence="29">
    <location>
        <position position="1019"/>
    </location>
</feature>
<feature type="modified residue" description="Phosphoserine" evidence="25 27 30">
    <location>
        <position position="1025"/>
    </location>
</feature>
<feature type="modified residue" description="Phosphoserine" evidence="25 27 29 30">
    <location>
        <position position="1028"/>
    </location>
</feature>
<feature type="modified residue" description="Phosphoserine" evidence="29">
    <location>
        <position position="1042"/>
    </location>
</feature>
<feature type="cross-link" description="Glycyl lysine isopeptide (Lys-Gly) (interchain with G-Cter in SUMO2)" evidence="35">
    <location>
        <position position="7"/>
    </location>
</feature>
<feature type="cross-link" description="Glycyl lysine isopeptide (Lys-Gly) (interchain with G-Cter in SUMO2)" evidence="35">
    <location>
        <position position="205"/>
    </location>
</feature>
<feature type="cross-link" description="Glycyl lysine isopeptide (Lys-Gly) (interchain with G-Cter in SUMO2)" evidence="35">
    <location>
        <position position="276"/>
    </location>
</feature>
<feature type="cross-link" description="Glycyl lysine isopeptide (Lys-Gly) (interchain with G-Cter in SUMO2)" evidence="35">
    <location>
        <position position="436"/>
    </location>
</feature>
<feature type="cross-link" description="Glycyl lysine isopeptide (Lys-Gly) (interchain with G-Cter in SUMO2)" evidence="35">
    <location>
        <position position="458"/>
    </location>
</feature>
<feature type="cross-link" description="Glycyl lysine isopeptide (Lys-Gly) (interchain with G-Cter in SUMO2)" evidence="35">
    <location>
        <position position="552"/>
    </location>
</feature>
<feature type="cross-link" description="Glycyl lysine isopeptide (Lys-Gly) (interchain with G-Cter in SUMO2)" evidence="35">
    <location>
        <position position="641"/>
    </location>
</feature>
<feature type="cross-link" description="Glycyl lysine isopeptide (Lys-Gly) (interchain with G-Cter in SUMO2)" evidence="34 35">
    <location>
        <position position="702"/>
    </location>
</feature>
<feature type="cross-link" description="Glycyl lysine isopeptide (Lys-Gly) (interchain with G-Cter in SUMO2)" evidence="32 35">
    <location>
        <position position="711"/>
    </location>
</feature>
<feature type="cross-link" description="Glycyl lysine isopeptide (Lys-Gly) (interchain with G-Cter in SUMO1); alternate" evidence="31">
    <location>
        <position position="723"/>
    </location>
</feature>
<feature type="cross-link" description="Glycyl lysine isopeptide (Lys-Gly) (interchain with G-Cter in SUMO2); alternate" evidence="31 32 33 34 35">
    <location>
        <position position="723"/>
    </location>
</feature>
<feature type="cross-link" description="Glycyl lysine isopeptide (Lys-Gly) (interchain with G-Cter in SUMO2)" evidence="31 35">
    <location>
        <position position="741"/>
    </location>
</feature>
<feature type="cross-link" description="Glycyl lysine isopeptide (Lys-Gly) (interchain with G-Cter in SUMO2)" evidence="35">
    <location>
        <position position="801"/>
    </location>
</feature>
<feature type="cross-link" description="Glycyl lysine isopeptide (Lys-Gly) (interchain with G-Cter in SUMO2)" evidence="35">
    <location>
        <position position="810"/>
    </location>
</feature>
<feature type="cross-link" description="Glycyl lysine isopeptide (Lys-Gly) (interchain with G-Cter in SUMO2)" evidence="35">
    <location>
        <position position="875"/>
    </location>
</feature>
<feature type="cross-link" description="Glycyl lysine isopeptide (Lys-Gly) (interchain with G-Cter in SUMO2)" evidence="32">
    <location>
        <position position="949"/>
    </location>
</feature>
<feature type="cross-link" description="Glycyl lysine isopeptide (Lys-Gly) (interchain with G-Cter in SUMO2)" evidence="35">
    <location>
        <position position="992"/>
    </location>
</feature>
<feature type="cross-link" description="Glycyl lysine isopeptide (Lys-Gly) (interchain with G-Cter in SUMO2)" evidence="34">
    <location>
        <position position="1041"/>
    </location>
</feature>
<feature type="splice variant" id="VSP_005772" description="In isoform Short." evidence="22 23">
    <location>
        <begin position="477"/>
        <end position="510"/>
    </location>
</feature>
<feature type="sequence variant" id="VAR_042382" description="In an ovarian serous carcinoma sample; somatic mutation." evidence="12">
    <original>I</original>
    <variation>T</variation>
    <location>
        <position position="320"/>
    </location>
</feature>
<feature type="sequence variant" id="VAR_042383" description="In a lung squamous cell carcinoma sample; somatic mutation." evidence="12">
    <original>T</original>
    <variation>N</variation>
    <location>
        <position position="403"/>
    </location>
</feature>
<feature type="sequence variant" id="VAR_042384" evidence="12">
    <original>S</original>
    <variation>N</variation>
    <location>
        <position position="762"/>
    </location>
</feature>
<feature type="sequence variant" id="VAR_052148" description="In dbSNP:rs35356723.">
    <original>N</original>
    <variation>S</variation>
    <location>
        <position position="796"/>
    </location>
</feature>
<feature type="sequence variant" id="VAR_042385" description="In dbSNP:rs34585297." evidence="12">
    <original>R</original>
    <variation>S</variation>
    <location>
        <position position="1009"/>
    </location>
</feature>
<feature type="mutagenesis site" description="Ubiquitination is significantly lower than wild-type." evidence="17">
    <original>S</original>
    <variation>A</variation>
    <location>
        <position position="768"/>
    </location>
</feature>
<feature type="mutagenesis site" description="Strongly reduced affinity for histone H3 that is not methylated at 'Lys-4' (H3K4me0)." evidence="15">
    <original>D</original>
    <variation>A</variation>
    <location>
        <position position="827"/>
    </location>
</feature>
<feature type="mutagenesis site" description="Abolishes interaction with histone H3." evidence="15">
    <original>C</original>
    <variation>W</variation>
    <location>
        <position position="840"/>
    </location>
</feature>
<feature type="mutagenesis site" description="Strongly reduced affinity for histone H3 that is acetylated at 'Lys-23' (H3K23ac)." evidence="15">
    <original>FN</original>
    <variation>AA</variation>
    <location>
        <begin position="979"/>
        <end position="980"/>
    </location>
</feature>
<feature type="sequence conflict" description="In Ref. 1; AAB63585." evidence="24" ref="1">
    <original>AASAAAS</original>
    <variation>RLGCAP</variation>
    <location>
        <begin position="14"/>
        <end position="20"/>
    </location>
</feature>
<feature type="sequence conflict" description="In Ref. 1; AAB63585." evidence="24" ref="1">
    <original>SAAPS</original>
    <variation>RGG</variation>
    <location>
        <begin position="24"/>
        <end position="28"/>
    </location>
</feature>
<feature type="sequence conflict" description="In Ref. 1; AAB63585." evidence="24" ref="1">
    <original>GSPVSG</original>
    <variation>ARRSA</variation>
    <location>
        <begin position="109"/>
        <end position="114"/>
    </location>
</feature>
<feature type="sequence conflict" description="In Ref. 1; AAB63585." evidence="24" ref="1">
    <original>A</original>
    <variation>T</variation>
    <location>
        <position position="350"/>
    </location>
</feature>
<feature type="sequence conflict" description="In Ref. 1; AAB63585." evidence="24" ref="1">
    <original>D</original>
    <variation>N</variation>
    <location>
        <position position="600"/>
    </location>
</feature>
<feature type="sequence conflict" description="In Ref. 1; AAB63585." evidence="24" ref="1">
    <original>M</original>
    <variation>I</variation>
    <location>
        <position position="608"/>
    </location>
</feature>
<feature type="sequence conflict" description="In Ref. 1; AAB63585." evidence="24" ref="1">
    <original>A</original>
    <variation>R</variation>
    <location>
        <position position="967"/>
    </location>
</feature>
<feature type="strand" evidence="37">
    <location>
        <begin position="827"/>
        <end position="829"/>
    </location>
</feature>
<feature type="turn" evidence="40">
    <location>
        <begin position="830"/>
        <end position="832"/>
    </location>
</feature>
<feature type="strand" evidence="39">
    <location>
        <begin position="836"/>
        <end position="840"/>
    </location>
</feature>
<feature type="strand" evidence="40">
    <location>
        <begin position="842"/>
        <end position="845"/>
    </location>
</feature>
<feature type="turn" evidence="40">
    <location>
        <begin position="850"/>
        <end position="852"/>
    </location>
</feature>
<feature type="strand" evidence="40">
    <location>
        <begin position="853"/>
        <end position="855"/>
    </location>
</feature>
<feature type="turn" evidence="40">
    <location>
        <begin position="868"/>
        <end position="870"/>
    </location>
</feature>
<feature type="strand" evidence="40">
    <location>
        <begin position="873"/>
        <end position="875"/>
    </location>
</feature>
<feature type="helix" evidence="40">
    <location>
        <begin position="881"/>
        <end position="883"/>
    </location>
</feature>
<feature type="turn" evidence="38">
    <location>
        <begin position="889"/>
        <end position="891"/>
    </location>
</feature>
<feature type="helix" evidence="40">
    <location>
        <begin position="902"/>
        <end position="917"/>
    </location>
</feature>
<feature type="helix" evidence="39">
    <location>
        <begin position="919"/>
        <end position="921"/>
    </location>
</feature>
<feature type="helix" evidence="40">
    <location>
        <begin position="922"/>
        <end position="924"/>
    </location>
</feature>
<feature type="helix" evidence="40">
    <location>
        <begin position="935"/>
        <end position="938"/>
    </location>
</feature>
<feature type="helix" evidence="40">
    <location>
        <begin position="945"/>
        <end position="953"/>
    </location>
</feature>
<feature type="turn" evidence="41">
    <location>
        <begin position="954"/>
        <end position="956"/>
    </location>
</feature>
<feature type="helix" evidence="40">
    <location>
        <begin position="962"/>
        <end position="979"/>
    </location>
</feature>
<feature type="helix" evidence="40">
    <location>
        <begin position="985"/>
        <end position="1004"/>
    </location>
</feature>
<feature type="strand" evidence="36">
    <location>
        <begin position="1005"/>
        <end position="1007"/>
    </location>
</feature>
<organism>
    <name type="scientific">Homo sapiens</name>
    <name type="common">Human</name>
    <dbReference type="NCBI Taxonomy" id="9606"/>
    <lineage>
        <taxon>Eukaryota</taxon>
        <taxon>Metazoa</taxon>
        <taxon>Chordata</taxon>
        <taxon>Craniata</taxon>
        <taxon>Vertebrata</taxon>
        <taxon>Euteleostomi</taxon>
        <taxon>Mammalia</taxon>
        <taxon>Eutheria</taxon>
        <taxon>Euarchontoglires</taxon>
        <taxon>Primates</taxon>
        <taxon>Haplorrhini</taxon>
        <taxon>Catarrhini</taxon>
        <taxon>Hominidae</taxon>
        <taxon>Homo</taxon>
    </lineage>
</organism>
<gene>
    <name type="primary">TRIM24</name>
    <name type="synonym">RNF82</name>
    <name type="synonym">TIF1</name>
    <name type="synonym">TIF1A</name>
</gene>
<evidence type="ECO:0000250" key="1"/>
<evidence type="ECO:0000250" key="2">
    <source>
        <dbReference type="UniProtKB" id="Q64127"/>
    </source>
</evidence>
<evidence type="ECO:0000255" key="3"/>
<evidence type="ECO:0000255" key="4">
    <source>
        <dbReference type="PROSITE-ProRule" id="PRU00024"/>
    </source>
</evidence>
<evidence type="ECO:0000255" key="5">
    <source>
        <dbReference type="PROSITE-ProRule" id="PRU00035"/>
    </source>
</evidence>
<evidence type="ECO:0000255" key="6">
    <source>
        <dbReference type="PROSITE-ProRule" id="PRU00146"/>
    </source>
</evidence>
<evidence type="ECO:0000255" key="7">
    <source>
        <dbReference type="PROSITE-ProRule" id="PRU00175"/>
    </source>
</evidence>
<evidence type="ECO:0000256" key="8">
    <source>
        <dbReference type="SAM" id="MobiDB-lite"/>
    </source>
</evidence>
<evidence type="ECO:0000269" key="9">
    <source>
    </source>
</evidence>
<evidence type="ECO:0000269" key="10">
    <source>
    </source>
</evidence>
<evidence type="ECO:0000269" key="11">
    <source>
    </source>
</evidence>
<evidence type="ECO:0000269" key="12">
    <source>
    </source>
</evidence>
<evidence type="ECO:0000269" key="13">
    <source>
    </source>
</evidence>
<evidence type="ECO:0000269" key="14">
    <source>
    </source>
</evidence>
<evidence type="ECO:0000269" key="15">
    <source>
    </source>
</evidence>
<evidence type="ECO:0000269" key="16">
    <source>
    </source>
</evidence>
<evidence type="ECO:0000269" key="17">
    <source>
    </source>
</evidence>
<evidence type="ECO:0000269" key="18">
    <source>
    </source>
</evidence>
<evidence type="ECO:0000269" key="19">
    <source>
    </source>
</evidence>
<evidence type="ECO:0000269" key="20">
    <source>
    </source>
</evidence>
<evidence type="ECO:0000269" key="21">
    <source>
    </source>
</evidence>
<evidence type="ECO:0000303" key="22">
    <source>
    </source>
</evidence>
<evidence type="ECO:0000303" key="23">
    <source>
    </source>
</evidence>
<evidence type="ECO:0000305" key="24"/>
<evidence type="ECO:0007744" key="25">
    <source>
    </source>
</evidence>
<evidence type="ECO:0007744" key="26">
    <source>
    </source>
</evidence>
<evidence type="ECO:0007744" key="27">
    <source>
    </source>
</evidence>
<evidence type="ECO:0007744" key="28">
    <source>
    </source>
</evidence>
<evidence type="ECO:0007744" key="29">
    <source>
    </source>
</evidence>
<evidence type="ECO:0007744" key="30">
    <source>
    </source>
</evidence>
<evidence type="ECO:0007744" key="31">
    <source>
    </source>
</evidence>
<evidence type="ECO:0007744" key="32">
    <source>
    </source>
</evidence>
<evidence type="ECO:0007744" key="33">
    <source>
    </source>
</evidence>
<evidence type="ECO:0007744" key="34">
    <source>
    </source>
</evidence>
<evidence type="ECO:0007744" key="35">
    <source>
    </source>
</evidence>
<evidence type="ECO:0007829" key="36">
    <source>
        <dbReference type="PDB" id="2YYN"/>
    </source>
</evidence>
<evidence type="ECO:0007829" key="37">
    <source>
        <dbReference type="PDB" id="3O33"/>
    </source>
</evidence>
<evidence type="ECO:0007829" key="38">
    <source>
        <dbReference type="PDB" id="3O36"/>
    </source>
</evidence>
<evidence type="ECO:0007829" key="39">
    <source>
        <dbReference type="PDB" id="3O37"/>
    </source>
</evidence>
<evidence type="ECO:0007829" key="40">
    <source>
        <dbReference type="PDB" id="4YBM"/>
    </source>
</evidence>
<evidence type="ECO:0007829" key="41">
    <source>
        <dbReference type="PDB" id="4YC9"/>
    </source>
</evidence>
<name>TIF1A_HUMAN</name>
<comment type="function">
    <text evidence="1 11 13 15 17 19 20">Transcriptional coactivator that interacts with numerous nuclear receptors and coactivators and modulates the transcription of target genes. Interacts with chromatin depending on histone H3 modifications, having the highest affinity for histone H3 that is both unmodified at 'Lys-4' (H3K4me0) and acetylated at 'Lys-23' (H3K23ac). Has E3 protein-ubiquitin ligase activity. During the DNA damage response, participates in an autoregulatory feedback loop with TP53. Early in response to DNA damage, ATM kinase phosphorylates TRIM24 leading to its ubiquitination and degradation. After sufficient DNA repair has occurred, TP53 activates TRIM24 transcription, ultimately leading to TRIM24-mediated TP53 ubiquitination and degradation (PubMed:24820418). Plays a role in the regulation of cell proliferation and apoptosis, at least in part via its effects on p53/TP53 levels. Up-regulates ligand-dependent transcription activation by AR, GCR/NR3C1, thyroid hormone receptor (TR) and ESR1. Modulates transcription activation by retinoic acid (RA) receptors, including RARA. Plays a role in regulating retinoic acid-dependent proliferation of hepatocytes (By similarity). Also participates in innate immunity by mediating the specific 'Lys-63'-linked ubiquitination of TRAF3 leading to activation of downstream signal transduction of the type I IFN pathway (PubMed:32324863). Additionally, negatively regulates NLRP3/CASP1/IL-1beta-mediated pyroptosis and cell migration probably by ubiquitinating NLRP3 (PubMed:33724611).</text>
</comment>
<comment type="catalytic activity">
    <reaction evidence="17 19">
        <text>S-ubiquitinyl-[E2 ubiquitin-conjugating enzyme]-L-cysteine + [acceptor protein]-L-lysine = [E2 ubiquitin-conjugating enzyme]-L-cysteine + N(6)-ubiquitinyl-[acceptor protein]-L-lysine.</text>
        <dbReference type="EC" id="2.3.2.27"/>
    </reaction>
</comment>
<comment type="pathway">
    <text>Protein modification; protein ubiquitination.</text>
</comment>
<comment type="subunit">
    <text evidence="1 10 13 14 15 16 21">Interacts with CARM1, NCOA2/GRIP1, PML, KAT5/TIP60, BRD7, CBX1, CBX3 and CBX5. Part of a coactivator complex containing TRIM24, NCOA2 and CARM1 (By similarity). Interacts with NR3C2/MCR. Interacts with the ligand-binding domain of estrogen receptors (in vitro). Interaction with DNA-bound estrogen receptors requires the presence of estradiol. Interacts with AR and p53/TP53. Interacts (via bromo domain) with histone H3 (via N-terminus), provided that it is not methylated at 'Lys-4' (H3K4me0). Does not interact with histone H3 that is methylated at 'Lys-4' (H3K4me1, H3K4me2 or H3K4me3). Interacts (via bromo domain) with histone H3 (via N-terminus) that is acetylated at 'Lys-23' (H3K23ac). Has the highest affinity for histone H3 that is both unmodified at 'Lys-4' (H3K4me0) and acetylated at 'Lys-23' (H3K23ac). Has very low affinity for histone H3 that is methylated at 'Lys-9' (H3K9me), or acetylated at both 'Lys-9' (H3K9ac) and 'Lys-14' (H3K14ac), or acetylated at 'Lys-27' (H3K27ac) (in vitro). Interacts with TRIM16.</text>
</comment>
<comment type="interaction">
    <interactant intactId="EBI-2130378">
        <id>O15164</id>
    </interactant>
    <interactant intactId="EBI-78473">
        <id>P03372</id>
        <label>ESR1</label>
    </interactant>
    <organismsDiffer>false</organismsDiffer>
    <experiments>3</experiments>
</comment>
<comment type="interaction">
    <interactant intactId="EBI-2130378">
        <id>O15164</id>
    </interactant>
    <interactant intactId="EBI-366083">
        <id>P04637</id>
        <label>TP53</label>
    </interactant>
    <organismsDiffer>false</organismsDiffer>
    <experiments>3</experiments>
</comment>
<comment type="interaction">
    <interactant intactId="EBI-2130378">
        <id>O15164</id>
    </interactant>
    <interactant intactId="EBI-2214398">
        <id>Q9UPN9</id>
        <label>TRIM33</label>
    </interactant>
    <organismsDiffer>false</organismsDiffer>
    <experiments>6</experiments>
</comment>
<comment type="subcellular location">
    <subcellularLocation>
        <location evidence="15 18 19">Nucleus</location>
    </subcellularLocation>
    <subcellularLocation>
        <location evidence="15">Cytoplasm</location>
    </subcellularLocation>
    <subcellularLocation>
        <location evidence="19">Mitochondrion</location>
    </subcellularLocation>
    <text evidence="18 19">Colocalizes with sites of active transcription. Predominantly nuclear. Translocated from nucleus to mitochondria to mediate antiviral immunity (PubMed:32324863). Localizes to sites of DNA damage (PubMed:25593309).</text>
</comment>
<comment type="alternative products">
    <event type="alternative splicing"/>
    <isoform>
        <id>O15164-1</id>
        <name>Long</name>
        <sequence type="displayed"/>
    </isoform>
    <isoform>
        <id>O15164-2</id>
        <name>Short</name>
        <sequence type="described" ref="VSP_005772"/>
    </isoform>
</comment>
<comment type="induction">
    <text evidence="15 17">Up-regulated in some cases of breast cancer (PubMed:21164480). Expression is induced by damage-activated TP53 (PubMed:24820418).</text>
</comment>
<comment type="PTM">
    <text evidence="17">Phosphorylated at Ser-768 by ATM kinase induces ubiquitination and degradation during DNA damage.</text>
</comment>
<comment type="PTM">
    <text evidence="2">Sumoylated.</text>
</comment>
<comment type="PTM">
    <text evidence="17">Undergoes ubiquitination-mediated degradation in response to DNA damage.</text>
</comment>
<comment type="disease">
    <text evidence="9">A chromosomal aberration involving TRIM24/TIF1 is found in papillary thyroid carcinomas (PTCs). Translocation t(7;10)(q32;q11) with RET. The translocation generates the TRIM24/RET (PTC6) oncogene.</text>
</comment>
<comment type="online information" name="Atlas of Genetics and Cytogenetics in Oncology and Haematology">
    <link uri="https://atlasgeneticsoncology.org/gene/504/trim24"/>
</comment>
<sequence length="1050" mass="116831">MEVAVEKAVAAAAAASAAASGGPSAAPSGENEAESRQGPDSERGGEAARLNLLDTCAVCHQNIQSRAPKLLPCLHSFCQRCLPAPQRYLMLPAPMLGSAETPPPVPAPGSPVSGSSPFATQVGVIRCPVCSQECAERHIIDNFFVKDTTEVPSSTVEKSNQVCTSCEDNAEANGFCVECVEWLCKTCIRAHQRVKFTKDHTVRQKEEVSPEAVGVTSQRPVFCPFHKKEQLKLYCETCDKLTCRDCQLLEHKEHRYQFIEEAFQNQKVIIDTLITKLMEKTKYIKFTGNQIQNRIIEVNQNQKQVEQDIKVAIFTLMVEINKKGKALLHQLESLAKDHRMKLMQQQQEVAGLSKQLEHVMHFSKWAVSSGSSTALLYSKRLITYRLRHLLRARCDASPVTNNTIQFHCDPSFWAQNIINLGSLVIEDKESQPQMPKQNPVVEQNSQPPSGLSSNQLSKFPTQISLAQLRLQHMQQQVMAQRQQVQRRPAPVGLPNPRMQGPIQQPSISHQQPPPRLINFQNHSPKPNGPVLPPHPQQLRYPPNQNIPRQAIKPNPLQMAFLAQQAIKQWQISSGQGTPSTTNSTSSTPSSPTITSAAGYDGKAFGSPMIDLSSPVGGSYNLPSLPDIDCSSTIMLDNIVRKDTNIDHGQPRPPSNRTVQSPNSSVPSPGLAGPVTMTSVHPPIRSPSASSVGSRGSSGSSSKPAGADSTHKVPVVMLEPIRIKQENSGPPENYDFPVVIVKQESDEESRPQNANYPRSILTSLLLNSSQSSTSEETVLRSDAPDSTGDQPGLHQDNSSNGKSEWLDPSQKSPLHVGETRKEDDPNEDWCAVCQNGGELLCCEKCPKVFHLSCHVPTLTNFPSGEWICTFCRDLSKPEVEYDCDAPSHNSEKKKTEGLVKLTPIDKRKCERLLLFLYCHEMSLAFQDPVPLTVPDYYKIIKNPMDLSTIKKRLQEDYSMYSKPEDFVADFRLIFQNCAEFNEPDSEVANAGIKLENYFEELLKNLYPEKRFPKPEFRNESEDNKFSDDSDDDFVQPRKKRLKSIEERQLLK</sequence>
<proteinExistence type="evidence at protein level"/>
<keyword id="KW-0002">3D-structure</keyword>
<keyword id="KW-0025">Alternative splicing</keyword>
<keyword id="KW-0103">Bromodomain</keyword>
<keyword id="KW-0160">Chromosomal rearrangement</keyword>
<keyword id="KW-0175">Coiled coil</keyword>
<keyword id="KW-0963">Cytoplasm</keyword>
<keyword id="KW-0903">Direct protein sequencing</keyword>
<keyword id="KW-0238">DNA-binding</keyword>
<keyword id="KW-1017">Isopeptide bond</keyword>
<keyword id="KW-0479">Metal-binding</keyword>
<keyword id="KW-0488">Methylation</keyword>
<keyword id="KW-0496">Mitochondrion</keyword>
<keyword id="KW-0539">Nucleus</keyword>
<keyword id="KW-0597">Phosphoprotein</keyword>
<keyword id="KW-1267">Proteomics identification</keyword>
<keyword id="KW-1185">Reference proteome</keyword>
<keyword id="KW-0677">Repeat</keyword>
<keyword id="KW-0678">Repressor</keyword>
<keyword id="KW-0804">Transcription</keyword>
<keyword id="KW-0805">Transcription regulation</keyword>
<keyword id="KW-0808">Transferase</keyword>
<keyword id="KW-0043">Tumor suppressor</keyword>
<keyword id="KW-0832">Ubl conjugation</keyword>
<keyword id="KW-0833">Ubl conjugation pathway</keyword>
<keyword id="KW-0862">Zinc</keyword>
<keyword id="KW-0863">Zinc-finger</keyword>
<protein>
    <recommendedName>
        <fullName>Transcription intermediary factor 1-alpha</fullName>
        <shortName>TIF1-alpha</shortName>
        <ecNumber evidence="17 19">2.3.2.27</ecNumber>
    </recommendedName>
    <alternativeName>
        <fullName>E3 ubiquitin-protein ligase TRIM24</fullName>
    </alternativeName>
    <alternativeName>
        <fullName>RING finger protein 82</fullName>
    </alternativeName>
    <alternativeName>
        <fullName evidence="24">RING-type E3 ubiquitin transferase TIF1-alpha</fullName>
    </alternativeName>
    <alternativeName>
        <fullName>Tripartite motif-containing protein 24</fullName>
    </alternativeName>
</protein>